<feature type="chain" id="PRO_0000324287" description="Endosome-associated-trafficking regulator 1">
    <location>
        <begin position="1"/>
        <end position="311"/>
    </location>
</feature>
<feature type="coiled-coil region" evidence="3">
    <location>
        <begin position="167"/>
        <end position="278"/>
    </location>
</feature>
<evidence type="ECO:0000250" key="1">
    <source>
        <dbReference type="UniProtKB" id="A2AIW0"/>
    </source>
</evidence>
<evidence type="ECO:0000250" key="2">
    <source>
        <dbReference type="UniProtKB" id="Q96C92"/>
    </source>
</evidence>
<evidence type="ECO:0000255" key="3"/>
<evidence type="ECO:0000305" key="4"/>
<protein>
    <recommendedName>
        <fullName evidence="4">Endosome-associated-trafficking regulator 1</fullName>
    </recommendedName>
    <alternativeName>
        <fullName evidence="2">Serologically defined colon cancer antigen 3 homolog</fullName>
    </alternativeName>
</protein>
<organism>
    <name type="scientific">Danio rerio</name>
    <name type="common">Zebrafish</name>
    <name type="synonym">Brachydanio rerio</name>
    <dbReference type="NCBI Taxonomy" id="7955"/>
    <lineage>
        <taxon>Eukaryota</taxon>
        <taxon>Metazoa</taxon>
        <taxon>Chordata</taxon>
        <taxon>Craniata</taxon>
        <taxon>Vertebrata</taxon>
        <taxon>Euteleostomi</taxon>
        <taxon>Actinopterygii</taxon>
        <taxon>Neopterygii</taxon>
        <taxon>Teleostei</taxon>
        <taxon>Ostariophysi</taxon>
        <taxon>Cypriniformes</taxon>
        <taxon>Danionidae</taxon>
        <taxon>Danioninae</taxon>
        <taxon>Danio</taxon>
    </lineage>
</organism>
<dbReference type="EMBL" id="CR381619">
    <property type="protein sequence ID" value="CAM15295.1"/>
    <property type="molecule type" value="Genomic_DNA"/>
</dbReference>
<dbReference type="SMR" id="A2CE83"/>
<dbReference type="FunCoup" id="A2CE83">
    <property type="interactions" value="1307"/>
</dbReference>
<dbReference type="STRING" id="7955.ENSDARP00000139942"/>
<dbReference type="PaxDb" id="7955-ENSDARP00000121586"/>
<dbReference type="Ensembl" id="ENSDART00000142455">
    <property type="protein sequence ID" value="ENSDARP00000121586"/>
    <property type="gene ID" value="ENSDARG00000095515"/>
</dbReference>
<dbReference type="AGR" id="ZFIN:ZDB-GENE-060526-242"/>
<dbReference type="ZFIN" id="ZDB-GENE-060526-242">
    <property type="gene designation" value="entr1"/>
</dbReference>
<dbReference type="eggNOG" id="ENOG502QUJK">
    <property type="taxonomic scope" value="Eukaryota"/>
</dbReference>
<dbReference type="InParanoid" id="A2CE83"/>
<dbReference type="PhylomeDB" id="A2CE83"/>
<dbReference type="PRO" id="PR:A2CE83"/>
<dbReference type="Proteomes" id="UP000000437">
    <property type="component" value="Unplaced"/>
</dbReference>
<dbReference type="Bgee" id="ENSDARG00000095515">
    <property type="expression patterns" value="Expressed in mature ovarian follicle and 20 other cell types or tissues"/>
</dbReference>
<dbReference type="ExpressionAtlas" id="A2CE83">
    <property type="expression patterns" value="baseline"/>
</dbReference>
<dbReference type="GO" id="GO:0005813">
    <property type="term" value="C:centrosome"/>
    <property type="evidence" value="ECO:0000250"/>
    <property type="project" value="UniProtKB"/>
</dbReference>
<dbReference type="GO" id="GO:0036064">
    <property type="term" value="C:ciliary basal body"/>
    <property type="evidence" value="ECO:0000250"/>
    <property type="project" value="UniProtKB"/>
</dbReference>
<dbReference type="GO" id="GO:0005769">
    <property type="term" value="C:early endosome"/>
    <property type="evidence" value="ECO:0000318"/>
    <property type="project" value="GO_Central"/>
</dbReference>
<dbReference type="GO" id="GO:0030496">
    <property type="term" value="C:midbody"/>
    <property type="evidence" value="ECO:0000318"/>
    <property type="project" value="GO_Central"/>
</dbReference>
<dbReference type="GO" id="GO:0055037">
    <property type="term" value="C:recycling endosome"/>
    <property type="evidence" value="ECO:0000318"/>
    <property type="project" value="GO_Central"/>
</dbReference>
<dbReference type="GO" id="GO:0051301">
    <property type="term" value="P:cell division"/>
    <property type="evidence" value="ECO:0007669"/>
    <property type="project" value="UniProtKB-KW"/>
</dbReference>
<dbReference type="GO" id="GO:0030030">
    <property type="term" value="P:cell projection organization"/>
    <property type="evidence" value="ECO:0007669"/>
    <property type="project" value="UniProtKB-KW"/>
</dbReference>
<dbReference type="GO" id="GO:0045724">
    <property type="term" value="P:positive regulation of cilium assembly"/>
    <property type="evidence" value="ECO:0000250"/>
    <property type="project" value="UniProtKB"/>
</dbReference>
<dbReference type="GO" id="GO:1903566">
    <property type="term" value="P:positive regulation of protein localization to cilium"/>
    <property type="evidence" value="ECO:0000250"/>
    <property type="project" value="UniProtKB"/>
</dbReference>
<dbReference type="GO" id="GO:0032465">
    <property type="term" value="P:regulation of cytokinesis"/>
    <property type="evidence" value="ECO:0000318"/>
    <property type="project" value="GO_Central"/>
</dbReference>
<dbReference type="InterPro" id="IPR026757">
    <property type="entry name" value="ENTR1"/>
</dbReference>
<dbReference type="PANTHER" id="PTHR31259">
    <property type="entry name" value="ENDOSOME-ASSOCIATED TRAFFICKING REGULATOR 1"/>
    <property type="match status" value="1"/>
</dbReference>
<dbReference type="PANTHER" id="PTHR31259:SF3">
    <property type="entry name" value="ENDOSOME-ASSOCIATED-TRAFFICKING REGULATOR 1"/>
    <property type="match status" value="1"/>
</dbReference>
<keyword id="KW-0131">Cell cycle</keyword>
<keyword id="KW-0132">Cell division</keyword>
<keyword id="KW-0966">Cell projection</keyword>
<keyword id="KW-0970">Cilium biogenesis/degradation</keyword>
<keyword id="KW-0175">Coiled coil</keyword>
<keyword id="KW-0963">Cytoplasm</keyword>
<keyword id="KW-0206">Cytoskeleton</keyword>
<keyword id="KW-0967">Endosome</keyword>
<keyword id="KW-1185">Reference proteome</keyword>
<proteinExistence type="inferred from homology"/>
<accession>A2CE83</accession>
<gene>
    <name evidence="2" type="primary">entr1</name>
    <name type="synonym">sdccag3</name>
    <name type="ORF">si:dkey-1o2.3</name>
</gene>
<name>ENTR1_DANRE</name>
<comment type="function">
    <text evidence="1 2">Endosome-associated protein that plays a role in membrane receptor sorting, cytokinesis and ciliogenesis.</text>
</comment>
<comment type="subcellular location">
    <subcellularLocation>
        <location evidence="1">Cytoplasm</location>
    </subcellularLocation>
    <subcellularLocation>
        <location evidence="2">Early endosome</location>
    </subcellularLocation>
    <subcellularLocation>
        <location evidence="2">Endosome</location>
    </subcellularLocation>
    <subcellularLocation>
        <location evidence="2">Recycling endosome</location>
    </subcellularLocation>
    <subcellularLocation>
        <location evidence="2">Midbody</location>
    </subcellularLocation>
    <subcellularLocation>
        <location evidence="2">Cytoplasm</location>
        <location evidence="2">Cytoskeleton</location>
        <location evidence="2">Microtubule organizing center</location>
        <location evidence="2">Centrosome</location>
    </subcellularLocation>
    <subcellularLocation>
        <location evidence="2">Cytoplasm</location>
        <location evidence="2">Cytoskeleton</location>
        <location evidence="2">Cilium basal body</location>
    </subcellularLocation>
</comment>
<comment type="similarity">
    <text evidence="4">Belongs to the ENTR1 family.</text>
</comment>
<reference key="1">
    <citation type="journal article" date="2013" name="Nature">
        <title>The zebrafish reference genome sequence and its relationship to the human genome.</title>
        <authorList>
            <person name="Howe K."/>
            <person name="Clark M.D."/>
            <person name="Torroja C.F."/>
            <person name="Torrance J."/>
            <person name="Berthelot C."/>
            <person name="Muffato M."/>
            <person name="Collins J.E."/>
            <person name="Humphray S."/>
            <person name="McLaren K."/>
            <person name="Matthews L."/>
            <person name="McLaren S."/>
            <person name="Sealy I."/>
            <person name="Caccamo M."/>
            <person name="Churcher C."/>
            <person name="Scott C."/>
            <person name="Barrett J.C."/>
            <person name="Koch R."/>
            <person name="Rauch G.J."/>
            <person name="White S."/>
            <person name="Chow W."/>
            <person name="Kilian B."/>
            <person name="Quintais L.T."/>
            <person name="Guerra-Assuncao J.A."/>
            <person name="Zhou Y."/>
            <person name="Gu Y."/>
            <person name="Yen J."/>
            <person name="Vogel J.H."/>
            <person name="Eyre T."/>
            <person name="Redmond S."/>
            <person name="Banerjee R."/>
            <person name="Chi J."/>
            <person name="Fu B."/>
            <person name="Langley E."/>
            <person name="Maguire S.F."/>
            <person name="Laird G.K."/>
            <person name="Lloyd D."/>
            <person name="Kenyon E."/>
            <person name="Donaldson S."/>
            <person name="Sehra H."/>
            <person name="Almeida-King J."/>
            <person name="Loveland J."/>
            <person name="Trevanion S."/>
            <person name="Jones M."/>
            <person name="Quail M."/>
            <person name="Willey D."/>
            <person name="Hunt A."/>
            <person name="Burton J."/>
            <person name="Sims S."/>
            <person name="McLay K."/>
            <person name="Plumb B."/>
            <person name="Davis J."/>
            <person name="Clee C."/>
            <person name="Oliver K."/>
            <person name="Clark R."/>
            <person name="Riddle C."/>
            <person name="Elliot D."/>
            <person name="Threadgold G."/>
            <person name="Harden G."/>
            <person name="Ware D."/>
            <person name="Begum S."/>
            <person name="Mortimore B."/>
            <person name="Kerry G."/>
            <person name="Heath P."/>
            <person name="Phillimore B."/>
            <person name="Tracey A."/>
            <person name="Corby N."/>
            <person name="Dunn M."/>
            <person name="Johnson C."/>
            <person name="Wood J."/>
            <person name="Clark S."/>
            <person name="Pelan S."/>
            <person name="Griffiths G."/>
            <person name="Smith M."/>
            <person name="Glithero R."/>
            <person name="Howden P."/>
            <person name="Barker N."/>
            <person name="Lloyd C."/>
            <person name="Stevens C."/>
            <person name="Harley J."/>
            <person name="Holt K."/>
            <person name="Panagiotidis G."/>
            <person name="Lovell J."/>
            <person name="Beasley H."/>
            <person name="Henderson C."/>
            <person name="Gordon D."/>
            <person name="Auger K."/>
            <person name="Wright D."/>
            <person name="Collins J."/>
            <person name="Raisen C."/>
            <person name="Dyer L."/>
            <person name="Leung K."/>
            <person name="Robertson L."/>
            <person name="Ambridge K."/>
            <person name="Leongamornlert D."/>
            <person name="McGuire S."/>
            <person name="Gilderthorp R."/>
            <person name="Griffiths C."/>
            <person name="Manthravadi D."/>
            <person name="Nichol S."/>
            <person name="Barker G."/>
            <person name="Whitehead S."/>
            <person name="Kay M."/>
            <person name="Brown J."/>
            <person name="Murnane C."/>
            <person name="Gray E."/>
            <person name="Humphries M."/>
            <person name="Sycamore N."/>
            <person name="Barker D."/>
            <person name="Saunders D."/>
            <person name="Wallis J."/>
            <person name="Babbage A."/>
            <person name="Hammond S."/>
            <person name="Mashreghi-Mohammadi M."/>
            <person name="Barr L."/>
            <person name="Martin S."/>
            <person name="Wray P."/>
            <person name="Ellington A."/>
            <person name="Matthews N."/>
            <person name="Ellwood M."/>
            <person name="Woodmansey R."/>
            <person name="Clark G."/>
            <person name="Cooper J."/>
            <person name="Tromans A."/>
            <person name="Grafham D."/>
            <person name="Skuce C."/>
            <person name="Pandian R."/>
            <person name="Andrews R."/>
            <person name="Harrison E."/>
            <person name="Kimberley A."/>
            <person name="Garnett J."/>
            <person name="Fosker N."/>
            <person name="Hall R."/>
            <person name="Garner P."/>
            <person name="Kelly D."/>
            <person name="Bird C."/>
            <person name="Palmer S."/>
            <person name="Gehring I."/>
            <person name="Berger A."/>
            <person name="Dooley C.M."/>
            <person name="Ersan-Urun Z."/>
            <person name="Eser C."/>
            <person name="Geiger H."/>
            <person name="Geisler M."/>
            <person name="Karotki L."/>
            <person name="Kirn A."/>
            <person name="Konantz J."/>
            <person name="Konantz M."/>
            <person name="Oberlander M."/>
            <person name="Rudolph-Geiger S."/>
            <person name="Teucke M."/>
            <person name="Lanz C."/>
            <person name="Raddatz G."/>
            <person name="Osoegawa K."/>
            <person name="Zhu B."/>
            <person name="Rapp A."/>
            <person name="Widaa S."/>
            <person name="Langford C."/>
            <person name="Yang F."/>
            <person name="Schuster S.C."/>
            <person name="Carter N.P."/>
            <person name="Harrow J."/>
            <person name="Ning Z."/>
            <person name="Herrero J."/>
            <person name="Searle S.M."/>
            <person name="Enright A."/>
            <person name="Geisler R."/>
            <person name="Plasterk R.H."/>
            <person name="Lee C."/>
            <person name="Westerfield M."/>
            <person name="de Jong P.J."/>
            <person name="Zon L.I."/>
            <person name="Postlethwait J.H."/>
            <person name="Nusslein-Volhard C."/>
            <person name="Hubbard T.J."/>
            <person name="Roest Crollius H."/>
            <person name="Rogers J."/>
            <person name="Stemple D.L."/>
        </authorList>
    </citation>
    <scope>NUCLEOTIDE SEQUENCE [LARGE SCALE GENOMIC DNA]</scope>
    <source>
        <strain>Tuebingen</strain>
    </source>
</reference>
<sequence>MSRHKSKKLIIEDDEPKQDELNPFSFKEFIRNKNQPSCSTEATEVYNGACLVEQDYNTSIDFATKGPFFTDPSALCQPPESEPDETWIESHQRSAIEGSPDFELCGASDISAYSEQSSLCSDEREAAEWELGQSDFLPKKHLSRISTGSYEGDEETSVIDISFHHKRGNAENGTKNLQQLREENSLLRKQVKELVRMSETDSRRIKQLTDEMHNKKLQEEKEANDLEAMVQSVEQNLQLMTKRAVKAENNISKLKQEMLKLQGQLEDYKSENERLRLGETAALATMRHNAQVASEYLNKAAQDAEISINSC</sequence>